<evidence type="ECO:0000255" key="1">
    <source>
        <dbReference type="HAMAP-Rule" id="MF_01519"/>
    </source>
</evidence>
<protein>
    <recommendedName>
        <fullName evidence="1">UPF0325 protein ESA_03178</fullName>
    </recommendedName>
</protein>
<comment type="similarity">
    <text evidence="1">Belongs to the UPF0325 family.</text>
</comment>
<accession>A7MGS2</accession>
<dbReference type="EMBL" id="CP000783">
    <property type="protein sequence ID" value="ABU78400.1"/>
    <property type="molecule type" value="Genomic_DNA"/>
</dbReference>
<dbReference type="RefSeq" id="WP_004386143.1">
    <property type="nucleotide sequence ID" value="NC_009778.1"/>
</dbReference>
<dbReference type="SMR" id="A7MGS2"/>
<dbReference type="KEGG" id="esa:ESA_03178"/>
<dbReference type="HOGENOM" id="CLU_136774_0_0_6"/>
<dbReference type="Proteomes" id="UP000000260">
    <property type="component" value="Chromosome"/>
</dbReference>
<dbReference type="HAMAP" id="MF_01519">
    <property type="entry name" value="UPF0325"/>
    <property type="match status" value="1"/>
</dbReference>
<dbReference type="InterPro" id="IPR020911">
    <property type="entry name" value="UPF0325"/>
</dbReference>
<dbReference type="NCBIfam" id="NF010213">
    <property type="entry name" value="PRK13677.1"/>
    <property type="match status" value="1"/>
</dbReference>
<dbReference type="Pfam" id="PF11944">
    <property type="entry name" value="DUF3461"/>
    <property type="match status" value="1"/>
</dbReference>
<gene>
    <name type="ordered locus">ESA_03178</name>
</gene>
<name>Y3178_CROS8</name>
<reference key="1">
    <citation type="journal article" date="2010" name="PLoS ONE">
        <title>Genome sequence of Cronobacter sakazakii BAA-894 and comparative genomic hybridization analysis with other Cronobacter species.</title>
        <authorList>
            <person name="Kucerova E."/>
            <person name="Clifton S.W."/>
            <person name="Xia X.Q."/>
            <person name="Long F."/>
            <person name="Porwollik S."/>
            <person name="Fulton L."/>
            <person name="Fronick C."/>
            <person name="Minx P."/>
            <person name="Kyung K."/>
            <person name="Warren W."/>
            <person name="Fulton R."/>
            <person name="Feng D."/>
            <person name="Wollam A."/>
            <person name="Shah N."/>
            <person name="Bhonagiri V."/>
            <person name="Nash W.E."/>
            <person name="Hallsworth-Pepin K."/>
            <person name="Wilson R.K."/>
            <person name="McClelland M."/>
            <person name="Forsythe S.J."/>
        </authorList>
    </citation>
    <scope>NUCLEOTIDE SEQUENCE [LARGE SCALE GENOMIC DNA]</scope>
    <source>
        <strain>ATCC BAA-894</strain>
    </source>
</reference>
<feature type="chain" id="PRO_1000068619" description="UPF0325 protein ESA_03178">
    <location>
        <begin position="1"/>
        <end position="129"/>
    </location>
</feature>
<proteinExistence type="inferred from homology"/>
<sequence length="129" mass="15191">MYDNLKSLGITNPDEIDRYSLRQEANNDILKIYFHKDKGEFFAKSVKFKYPRQRKTVVADGVGQGYKEVQEISPNLRYVIDELDQLCQRDRTEVDLKRKILDDLRHLESVVANKISEIESDLEKLTRNK</sequence>
<keyword id="KW-1185">Reference proteome</keyword>
<organism>
    <name type="scientific">Cronobacter sakazakii (strain ATCC BAA-894)</name>
    <name type="common">Enterobacter sakazakii</name>
    <dbReference type="NCBI Taxonomy" id="290339"/>
    <lineage>
        <taxon>Bacteria</taxon>
        <taxon>Pseudomonadati</taxon>
        <taxon>Pseudomonadota</taxon>
        <taxon>Gammaproteobacteria</taxon>
        <taxon>Enterobacterales</taxon>
        <taxon>Enterobacteriaceae</taxon>
        <taxon>Cronobacter</taxon>
    </lineage>
</organism>